<sequence>MLQACKMEGFPLVPPPSEDLVPYDTDLYQRQTHEYYPYLSSDGESHSDHYWDFHPHHVHSEFESFAENNFTELQSVQPPQLQQLYRHMELEQMHVLDTPMVPPHPSLGHQVSYLPRMCLQYPSLSPAQPSSDEEEGERQSPPLEVSDGEADGLEPGPGLLPGETGSKKKIRLYQFLLDLLRSGDMKDSIWWVDKDKGTFQFSSKHKEALAHRWGIQKGNRKKMTYQKMARALRNYGKTGEVKKVKKKLTYQFSGEVLGRGGLAERRHPPH</sequence>
<organism>
    <name type="scientific">Homo sapiens</name>
    <name type="common">Human</name>
    <dbReference type="NCBI Taxonomy" id="9606"/>
    <lineage>
        <taxon>Eukaryota</taxon>
        <taxon>Metazoa</taxon>
        <taxon>Chordata</taxon>
        <taxon>Craniata</taxon>
        <taxon>Vertebrata</taxon>
        <taxon>Euteleostomi</taxon>
        <taxon>Mammalia</taxon>
        <taxon>Eutheria</taxon>
        <taxon>Euarchontoglires</taxon>
        <taxon>Primates</taxon>
        <taxon>Haplorrhini</taxon>
        <taxon>Catarrhini</taxon>
        <taxon>Hominidae</taxon>
        <taxon>Homo</taxon>
    </lineage>
</organism>
<name>SPI1_HUMAN</name>
<protein>
    <recommendedName>
        <fullName evidence="12">Transcription factor PU.1</fullName>
    </recommendedName>
    <alternativeName>
        <fullName>31 kDa-transforming protein</fullName>
    </alternativeName>
</protein>
<accession>P17947</accession>
<gene>
    <name type="primary">SPI1</name>
</gene>
<keyword id="KW-0002">3D-structure</keyword>
<keyword id="KW-0010">Activator</keyword>
<keyword id="KW-0025">Alternative splicing</keyword>
<keyword id="KW-0217">Developmental protein</keyword>
<keyword id="KW-0225">Disease variant</keyword>
<keyword id="KW-0238">DNA-binding</keyword>
<keyword id="KW-0539">Nucleus</keyword>
<keyword id="KW-0597">Phosphoprotein</keyword>
<keyword id="KW-1267">Proteomics identification</keyword>
<keyword id="KW-0656">Proto-oncogene</keyword>
<keyword id="KW-1185">Reference proteome</keyword>
<keyword id="KW-0694">RNA-binding</keyword>
<keyword id="KW-0804">Transcription</keyword>
<keyword id="KW-0805">Transcription regulation</keyword>
<proteinExistence type="evidence at protein level"/>
<evidence type="ECO:0000250" key="1">
    <source>
        <dbReference type="UniProtKB" id="P17433"/>
    </source>
</evidence>
<evidence type="ECO:0000250" key="2">
    <source>
        <dbReference type="UniProtKB" id="Q6BDS1"/>
    </source>
</evidence>
<evidence type="ECO:0000255" key="3">
    <source>
        <dbReference type="PROSITE-ProRule" id="PRU00237"/>
    </source>
</evidence>
<evidence type="ECO:0000256" key="4">
    <source>
        <dbReference type="SAM" id="MobiDB-lite"/>
    </source>
</evidence>
<evidence type="ECO:0000269" key="5">
    <source>
    </source>
</evidence>
<evidence type="ECO:0000269" key="6">
    <source>
    </source>
</evidence>
<evidence type="ECO:0000269" key="7">
    <source>
    </source>
</evidence>
<evidence type="ECO:0000269" key="8">
    <source>
    </source>
</evidence>
<evidence type="ECO:0000269" key="9">
    <source>
    </source>
</evidence>
<evidence type="ECO:0000269" key="10">
    <source>
    </source>
</evidence>
<evidence type="ECO:0000269" key="11">
    <source>
    </source>
</evidence>
<evidence type="ECO:0000303" key="12">
    <source>
    </source>
</evidence>
<evidence type="ECO:0000303" key="13">
    <source ref="3"/>
</evidence>
<evidence type="ECO:0000305" key="14"/>
<evidence type="ECO:0007744" key="15">
    <source>
    </source>
</evidence>
<evidence type="ECO:0007829" key="16">
    <source>
        <dbReference type="PDB" id="8EE9"/>
    </source>
</evidence>
<comment type="function">
    <text evidence="1 2 9 11">Pioneer transcription factor, which controls hematopoietic cell fate by decompacting stem cell heterochromatin and allowing other transcription factors to enter otherwise inaccessible genomic sites. Once in open chromatin, can directly control gene expression by binding genetic regulatory elements and can also more broadly influence transcription by recruiting transcription factors, such as interferon regulatory factors (IRFs), to otherwise inaccessible genomic regions (PubMed:23658224, PubMed:33951726). Transcriptionally activates genes important for myeloid and lymphoid lineages, such as CSF1R (By similarity). Transcriptional activation from certain promoters, possibly containing low affinity binding sites, is achieved cooperatively with other transcription factors. FCER1A transactivation is achieved in cooperation with GATA1 (By similarity). May be particularly important for the pro- to pre-B cell transition (PubMed:33951726). Binds (via the ETS domain) onto the purine-rich DNA core sequence 5'-GAGGAA-3', also known as the PU-box (PubMed:33951726). In vitro can bind RNA and interfere with pre-mRNA splicing (By similarity).</text>
</comment>
<comment type="activity regulation">
    <text evidence="1">Transcriptional activity at macrophage-specific genes is inhibited by interaction with GFI1, which results in the inhibition of SPI1-induced macrophage differentiation of myeloid progenitor cells, but not that of the granulocyte lineage.</text>
</comment>
<comment type="subunit">
    <text evidence="1 5 6 7 10 11">Binds DNA as a monomer. Can form homomers (PubMed:10196196). Directly interacts with CEBPD/NF-IL6-beta; this interaction does not affect DNA-binding properties of each partner (By similarity). Interacts with NONO/p54(nrb) (By similarity). Interacts with RUNX1/AML1 (PubMed:10207087). Interacts with GFI1; the interaction represses SPI1 transcriptional activity, hence blocks SPI1-induced macrophage differentiation of myeloid progenitor cells (PubMed:17197705). Interacts with CEBPE (PubMed:26019275). Interacts with IRF4/Pip and IRF8 (PubMed:10196196, PubMed:33951726). Interacts with JUN (PubMed:10196196). Interacts with RB1 (PubMed:10196196). Interacts with TBP (PubMed:10196196).</text>
</comment>
<comment type="interaction">
    <interactant intactId="EBI-2293548">
        <id>P17947</id>
    </interactant>
    <interactant intactId="EBI-2806671">
        <id>P23769</id>
        <label>GATA2</label>
    </interactant>
    <organismsDiffer>false</organismsDiffer>
    <experiments>4</experiments>
</comment>
<comment type="interaction">
    <interactant intactId="EBI-2293548">
        <id>P17947</id>
    </interactant>
    <interactant intactId="EBI-2293516">
        <id>P31260</id>
        <label>HOXA10</label>
    </interactant>
    <organismsDiffer>false</organismsDiffer>
    <experiments>2</experiments>
</comment>
<comment type="interaction">
    <interactant intactId="EBI-2293548">
        <id>P17947</id>
    </interactant>
    <interactant intactId="EBI-867256">
        <id>Q15156</id>
        <label>PML-RAR</label>
    </interactant>
    <organismsDiffer>false</organismsDiffer>
    <experiments>20</experiments>
</comment>
<comment type="interaction">
    <interactant intactId="EBI-2293548">
        <id>P17947</id>
    </interactant>
    <interactant intactId="EBI-352053">
        <id>P78527</id>
        <label>PRKDC</label>
    </interactant>
    <organismsDiffer>false</organismsDiffer>
    <experiments>2</experiments>
</comment>
<comment type="subcellular location">
    <subcellularLocation>
        <location evidence="3 11">Nucleus</location>
    </subcellularLocation>
</comment>
<comment type="alternative products">
    <event type="alternative splicing"/>
    <isoform>
        <id>P17947-1</id>
        <name>1</name>
        <sequence type="displayed"/>
    </isoform>
    <isoform>
        <id>P17947-2</id>
        <name>2</name>
        <sequence type="described" ref="VSP_038690"/>
    </isoform>
</comment>
<comment type="tissue specificity">
    <text evidence="8 11">In the bone marrow, concentrated in hematopoietic stem cell, lymphoid progenitor, myeloid lineage (granulocyte macrophage progenitors, classical dendritic cells, monocytes) and B-cell clusters. Among B-cells, predominantly expressed in pre-B1 cells (PubMed:33951726). Expressed in germinal center B-cells (PubMed:23166356).</text>
</comment>
<comment type="induction">
    <text evidence="8">Highly expressed in both FV-P and FV-A-induced erythro-leukemia cell lines that have undergone rearrangements of the SPI1 gene due to the insertion of SFFV. Negatively regulated by microRNA-155 (miR-155) (PubMed:23166356).</text>
</comment>
<comment type="disease" evidence="11">
    <disease id="DI-06310">
        <name>Agammaglobulinemia 10, autosomal dominant</name>
        <acronym>AGM10</acronym>
        <description>A form of agammaglobulinemia, a primary immunodeficiency characterized by profoundly low or absent serum antibodies and low or absent circulating B-cells due to an early block of B-cell development. Affected individuals develop severe infections in the first years of life.</description>
        <dbReference type="MIM" id="619707"/>
    </disease>
    <text>The disease is caused by variants affecting the gene represented in this entry.</text>
</comment>
<comment type="similarity">
    <text evidence="14">Belongs to the ETS family.</text>
</comment>
<comment type="sequence caution" evidence="14">
    <conflict type="erroneous initiation">
        <sequence resource="EMBL-CDS" id="CAA36281"/>
    </conflict>
    <text>Truncated N-terminus.</text>
</comment>
<comment type="online information" name="Atlas of Genetics and Cytogenetics in Oncology and Haematology">
    <link uri="https://atlasgeneticsoncology.org/gene/269/SPI1"/>
</comment>
<reference key="1">
    <citation type="journal article" date="1990" name="Oncogene">
        <title>The human homologue of the putative proto-oncogene Spi-1: characterization and expression in tumors.</title>
        <authorList>
            <person name="Ray D."/>
            <person name="Culine S."/>
            <person name="Tavitian A."/>
            <person name="Moreau-Gachelin F."/>
        </authorList>
    </citation>
    <scope>NUCLEOTIDE SEQUENCE [MRNA] (ISOFORM 1)</scope>
</reference>
<reference key="2">
    <citation type="journal article" date="1990" name="Oncogene">
        <authorList>
            <person name="Ray D."/>
            <person name="Culine S."/>
            <person name="Tavitian A."/>
            <person name="Moreau-Gachelin F."/>
        </authorList>
    </citation>
    <scope>ERRATUM OF PUBMED:1693183</scope>
    <scope>SEQUENCE REVISION</scope>
</reference>
<reference key="3">
    <citation type="submission" date="2001-02" db="EMBL/GenBank/DDBJ databases">
        <title>Full-length cDNA libraries and normalization.</title>
        <authorList>
            <person name="Li W.B."/>
            <person name="Gruber C."/>
            <person name="Jessee J."/>
            <person name="Polayes D."/>
        </authorList>
    </citation>
    <scope>NUCLEOTIDE SEQUENCE [LARGE SCALE MRNA] (ISOFORM 2)</scope>
    <source>
        <tissue>Fetal liver</tissue>
    </source>
</reference>
<reference key="4">
    <citation type="journal article" date="2006" name="Nature">
        <title>Human chromosome 11 DNA sequence and analysis including novel gene identification.</title>
        <authorList>
            <person name="Taylor T.D."/>
            <person name="Noguchi H."/>
            <person name="Totoki Y."/>
            <person name="Toyoda A."/>
            <person name="Kuroki Y."/>
            <person name="Dewar K."/>
            <person name="Lloyd C."/>
            <person name="Itoh T."/>
            <person name="Takeda T."/>
            <person name="Kim D.-W."/>
            <person name="She X."/>
            <person name="Barlow K.F."/>
            <person name="Bloom T."/>
            <person name="Bruford E."/>
            <person name="Chang J.L."/>
            <person name="Cuomo C.A."/>
            <person name="Eichler E."/>
            <person name="FitzGerald M.G."/>
            <person name="Jaffe D.B."/>
            <person name="LaButti K."/>
            <person name="Nicol R."/>
            <person name="Park H.-S."/>
            <person name="Seaman C."/>
            <person name="Sougnez C."/>
            <person name="Yang X."/>
            <person name="Zimmer A.R."/>
            <person name="Zody M.C."/>
            <person name="Birren B.W."/>
            <person name="Nusbaum C."/>
            <person name="Fujiyama A."/>
            <person name="Hattori M."/>
            <person name="Rogers J."/>
            <person name="Lander E.S."/>
            <person name="Sakaki Y."/>
        </authorList>
    </citation>
    <scope>NUCLEOTIDE SEQUENCE [LARGE SCALE GENOMIC DNA]</scope>
</reference>
<reference key="5">
    <citation type="journal article" date="1999" name="J. Biol. Chem.">
        <title>SPI-B activates transcription via a unique proline, serine, and threonine domain and exhibits DNA binding affinity differences from PU.1.</title>
        <authorList>
            <person name="Rao S."/>
            <person name="Matsumura A."/>
            <person name="Yoon J."/>
            <person name="Simon M.C."/>
        </authorList>
    </citation>
    <scope>INTERACTION WITH IRF4; JUN; RB1; TBP</scope>
    <scope>HOMOMERIZATION</scope>
</reference>
<reference key="6">
    <citation type="journal article" date="1999" name="Mol. Cell. Biol.">
        <title>Functional and physical interactions between AML1 proteins and an ETS protein, MEF: implications for the pathogenesis of t(8;21)-positive leukemias.</title>
        <authorList>
            <person name="Mao S."/>
            <person name="Frank R.C."/>
            <person name="Zhang J."/>
            <person name="Miyazaki Y."/>
            <person name="Nimer S.D."/>
        </authorList>
    </citation>
    <scope>INTERACTION WITH RUNX1</scope>
</reference>
<reference key="7">
    <citation type="journal article" date="2007" name="J. Biol. Chem.">
        <title>The transcriptional repressor GFI-1 antagonizes PU.1 activity through protein-protein interaction.</title>
        <authorList>
            <person name="Dahl R."/>
            <person name="Iyer S.R."/>
            <person name="Owens K.S."/>
            <person name="Cuylear D.D."/>
            <person name="Simon M.C."/>
        </authorList>
    </citation>
    <scope>INTERACTION WITH GFI1</scope>
</reference>
<reference key="8">
    <citation type="journal article" date="2012" name="J. Exp. Med.">
        <title>BCL6 positively regulates AID and germinal center gene expression via repression of miR-155.</title>
        <authorList>
            <person name="Basso K."/>
            <person name="Schneider C."/>
            <person name="Shen Q."/>
            <person name="Holmes A.B."/>
            <person name="Setty M."/>
            <person name="Leslie C."/>
            <person name="Dalla-Favera R."/>
        </authorList>
    </citation>
    <scope>INDUCTION</scope>
    <scope>TISSUE SPECIFICITY</scope>
</reference>
<reference key="9">
    <citation type="journal article" date="2013" name="Nucleic Acids Res.">
        <title>Mechanisms of in vivo binding site selection of the hematopoietic master transcription factor PU.1.</title>
        <authorList>
            <person name="Pham T.H."/>
            <person name="Minderjahn J."/>
            <person name="Schmidl C."/>
            <person name="Hoffmeister H."/>
            <person name="Schmidhofer S."/>
            <person name="Chen W."/>
            <person name="Laengst G."/>
            <person name="Benner C."/>
            <person name="Rehli M."/>
        </authorList>
    </citation>
    <scope>FUNCTION</scope>
</reference>
<reference key="10">
    <citation type="journal article" date="2014" name="J. Proteomics">
        <title>An enzyme assisted RP-RPLC approach for in-depth analysis of human liver phosphoproteome.</title>
        <authorList>
            <person name="Bian Y."/>
            <person name="Song C."/>
            <person name="Cheng K."/>
            <person name="Dong M."/>
            <person name="Wang F."/>
            <person name="Huang J."/>
            <person name="Sun D."/>
            <person name="Wang L."/>
            <person name="Ye M."/>
            <person name="Zou H."/>
        </authorList>
    </citation>
    <scope>PHOSPHORYLATION [LARGE SCALE ANALYSIS] AT SER-140 AND SER-146</scope>
    <scope>IDENTIFICATION BY MASS SPECTROMETRY [LARGE SCALE ANALYSIS]</scope>
    <source>
        <tissue>Liver</tissue>
    </source>
</reference>
<reference key="11">
    <citation type="journal article" date="2015" name="J. Immunol.">
        <title>A novel in-frame deletion in the leucine zipper domain of C/EBPepsilon leads to neutrophil-specific granule deficiency.</title>
        <authorList>
            <person name="Wada T."/>
            <person name="Akagi T."/>
            <person name="Muraoka M."/>
            <person name="Toma T."/>
            <person name="Kaji K."/>
            <person name="Agematsu K."/>
            <person name="Koeffler H.P."/>
            <person name="Yokota T."/>
            <person name="Yachie A."/>
        </authorList>
    </citation>
    <scope>INTERACTION WITH CEBPE</scope>
</reference>
<reference key="12">
    <citation type="journal article" date="2021" name="J. Exp. Med.">
        <title>Constrained chromatin accessibility in PU.1-mutated agammaglobulinemia patients.</title>
        <authorList>
            <person name="Le Coz C."/>
            <person name="Nguyen D.N."/>
            <person name="Su C."/>
            <person name="Nolan B.E."/>
            <person name="Albrecht A.V."/>
            <person name="Xhani S."/>
            <person name="Sun D."/>
            <person name="Demaree B."/>
            <person name="Pillarisetti P."/>
            <person name="Khanna C."/>
            <person name="Wright F."/>
            <person name="Chen P.A."/>
            <person name="Yoon S."/>
            <person name="Stiegler A.L."/>
            <person name="Maurer K."/>
            <person name="Garifallou J.P."/>
            <person name="Rymaszewski A."/>
            <person name="Kroft S.H."/>
            <person name="Olson T.S."/>
            <person name="Seif A.E."/>
            <person name="Wertheim G."/>
            <person name="Grant S.F.A."/>
            <person name="Vo L.T."/>
            <person name="Puck J.M."/>
            <person name="Sullivan K.E."/>
            <person name="Routes J.M."/>
            <person name="Zakharova V."/>
            <person name="Shcherbina A."/>
            <person name="Mukhina A."/>
            <person name="Rudy N.L."/>
            <person name="Hurst A.C.E."/>
            <person name="Atkinson T.P."/>
            <person name="Boggon T.J."/>
            <person name="Hakonarson H."/>
            <person name="Abate A.R."/>
            <person name="Hajjar J."/>
            <person name="Nicholas S.K."/>
            <person name="Lupski J.R."/>
            <person name="Verbsky J."/>
            <person name="Chinn I.K."/>
            <person name="Gonzalez M.V."/>
            <person name="Wells A.D."/>
            <person name="Marson A."/>
            <person name="Poon G.M.K."/>
            <person name="Romberg N."/>
        </authorList>
    </citation>
    <scope>INVOLVEMENT IN AGM10</scope>
    <scope>VARIANTS AGM10 110-GLN--HIS-270 DEL; 121-TYR--HIS-270 DEL; PRO-211 AND GLY-241</scope>
    <scope>CHARACTERIZATION OF VARIANTS AGM10 110-GLN--HIS-270 DEL; 121-TYR--HIS-270 DEL; PRO-211 AND GLY-241</scope>
    <scope>SUBCELLULAR LOCATION</scope>
    <scope>TISSUE SPECIFICITY</scope>
    <scope>INTERACTION WITH IRF4 AND IRF8</scope>
</reference>
<dbReference type="EMBL" id="X52056">
    <property type="protein sequence ID" value="CAA36281.1"/>
    <property type="status" value="ALT_INIT"/>
    <property type="molecule type" value="mRNA"/>
</dbReference>
<dbReference type="EMBL" id="AL532058">
    <property type="status" value="NOT_ANNOTATED_CDS"/>
    <property type="molecule type" value="mRNA"/>
</dbReference>
<dbReference type="EMBL" id="AC090559">
    <property type="status" value="NOT_ANNOTATED_CDS"/>
    <property type="molecule type" value="Genomic_DNA"/>
</dbReference>
<dbReference type="EMBL" id="AC090582">
    <property type="status" value="NOT_ANNOTATED_CDS"/>
    <property type="molecule type" value="Genomic_DNA"/>
</dbReference>
<dbReference type="CCDS" id="CCDS44591.1">
    <molecule id="P17947-2"/>
</dbReference>
<dbReference type="CCDS" id="CCDS7933.2">
    <molecule id="P17947-1"/>
</dbReference>
<dbReference type="PIR" id="S60367">
    <property type="entry name" value="S60367"/>
</dbReference>
<dbReference type="RefSeq" id="NP_001074016.1">
    <molecule id="P17947-2"/>
    <property type="nucleotide sequence ID" value="NM_001080547.2"/>
</dbReference>
<dbReference type="RefSeq" id="NP_003111.2">
    <molecule id="P17947-1"/>
    <property type="nucleotide sequence ID" value="NM_003120.3"/>
</dbReference>
<dbReference type="PDB" id="8E3K">
    <property type="method" value="X-ray"/>
    <property type="resolution" value="1.28 A"/>
    <property type="chains" value="F=165-270"/>
</dbReference>
<dbReference type="PDB" id="8E3R">
    <property type="method" value="X-ray"/>
    <property type="resolution" value="1.45 A"/>
    <property type="chains" value="F=165-270"/>
</dbReference>
<dbReference type="PDB" id="8E4H">
    <property type="method" value="X-ray"/>
    <property type="resolution" value="1.39 A"/>
    <property type="chains" value="F=165-270"/>
</dbReference>
<dbReference type="PDB" id="8E5Y">
    <property type="method" value="X-ray"/>
    <property type="resolution" value="1.32 A"/>
    <property type="chains" value="F=165-270"/>
</dbReference>
<dbReference type="PDB" id="8EBH">
    <property type="method" value="X-ray"/>
    <property type="resolution" value="1.33 A"/>
    <property type="chains" value="F=165-270"/>
</dbReference>
<dbReference type="PDB" id="8EE9">
    <property type="method" value="X-ray"/>
    <property type="resolution" value="1.22 A"/>
    <property type="chains" value="F=165-270"/>
</dbReference>
<dbReference type="PDB" id="8EJ6">
    <property type="method" value="X-ray"/>
    <property type="resolution" value="1.39 A"/>
    <property type="chains" value="F=165-270"/>
</dbReference>
<dbReference type="PDB" id="8EJ8">
    <property type="method" value="X-ray"/>
    <property type="resolution" value="1.45 A"/>
    <property type="chains" value="F=165-270"/>
</dbReference>
<dbReference type="PDB" id="8EK3">
    <property type="method" value="X-ray"/>
    <property type="resolution" value="1.38 A"/>
    <property type="chains" value="F=165-270"/>
</dbReference>
<dbReference type="PDB" id="8EK8">
    <property type="method" value="X-ray"/>
    <property type="resolution" value="2.63 A"/>
    <property type="chains" value="E/F=165-270"/>
</dbReference>
<dbReference type="PDB" id="8EKJ">
    <property type="method" value="X-ray"/>
    <property type="resolution" value="1.54 A"/>
    <property type="chains" value="F=165-270"/>
</dbReference>
<dbReference type="PDB" id="8EKU">
    <property type="method" value="X-ray"/>
    <property type="resolution" value="1.52 A"/>
    <property type="chains" value="F=165-270"/>
</dbReference>
<dbReference type="PDB" id="8EKV">
    <property type="method" value="X-ray"/>
    <property type="resolution" value="1.62 A"/>
    <property type="chains" value="F=165-270"/>
</dbReference>
<dbReference type="PDB" id="8EKZ">
    <property type="method" value="X-ray"/>
    <property type="resolution" value="1.42 A"/>
    <property type="chains" value="F=165-270"/>
</dbReference>
<dbReference type="PDB" id="8EM9">
    <property type="method" value="X-ray"/>
    <property type="resolution" value="2.34 A"/>
    <property type="chains" value="F=165-270"/>
</dbReference>
<dbReference type="PDB" id="8EMD">
    <property type="method" value="X-ray"/>
    <property type="resolution" value="1.55 A"/>
    <property type="chains" value="F=165-270"/>
</dbReference>
<dbReference type="PDB" id="8ENG">
    <property type="method" value="X-ray"/>
    <property type="resolution" value="1.25 A"/>
    <property type="chains" value="F=165-270"/>
</dbReference>
<dbReference type="PDB" id="8EO1">
    <property type="method" value="X-ray"/>
    <property type="resolution" value="1.28 A"/>
    <property type="chains" value="F=165-270"/>
</dbReference>
<dbReference type="PDB" id="8EO4">
    <property type="method" value="X-ray"/>
    <property type="resolution" value="1.24 A"/>
    <property type="chains" value="F=165-270"/>
</dbReference>
<dbReference type="PDB" id="8EQG">
    <property type="method" value="X-ray"/>
    <property type="resolution" value="1.39 A"/>
    <property type="chains" value="F=165-270"/>
</dbReference>
<dbReference type="PDB" id="8EQK">
    <property type="method" value="X-ray"/>
    <property type="resolution" value="1.45 A"/>
    <property type="chains" value="F=165-270"/>
</dbReference>
<dbReference type="PDB" id="8EQL">
    <property type="method" value="X-ray"/>
    <property type="resolution" value="1.52 A"/>
    <property type="chains" value="F=165-270"/>
</dbReference>
<dbReference type="PDB" id="8T9U">
    <property type="method" value="X-ray"/>
    <property type="resolution" value="1.47 A"/>
    <property type="chains" value="F=165-270"/>
</dbReference>
<dbReference type="PDB" id="8UFF">
    <property type="method" value="X-ray"/>
    <property type="resolution" value="1.66 A"/>
    <property type="chains" value="F=165-270"/>
</dbReference>
<dbReference type="PDB" id="8UFK">
    <property type="method" value="X-ray"/>
    <property type="resolution" value="2.41 A"/>
    <property type="chains" value="E/F=165-270"/>
</dbReference>
<dbReference type="PDB" id="8UFZ">
    <property type="method" value="X-ray"/>
    <property type="resolution" value="3.06 A"/>
    <property type="chains" value="E/F=165-270"/>
</dbReference>
<dbReference type="PDB" id="8UHK">
    <property type="method" value="X-ray"/>
    <property type="resolution" value="3.08 A"/>
    <property type="chains" value="E/F=165-270"/>
</dbReference>
<dbReference type="PDB" id="8V9N">
    <property type="method" value="X-ray"/>
    <property type="resolution" value="1.78 A"/>
    <property type="chains" value="F=165-270"/>
</dbReference>
<dbReference type="PDB" id="8VDH">
    <property type="method" value="X-ray"/>
    <property type="resolution" value="1.64 A"/>
    <property type="chains" value="F=165-270"/>
</dbReference>
<dbReference type="PDB" id="8VDI">
    <property type="method" value="X-ray"/>
    <property type="resolution" value="1.93 A"/>
    <property type="chains" value="F=165-270"/>
</dbReference>
<dbReference type="PDBsum" id="8E3K"/>
<dbReference type="PDBsum" id="8E3R"/>
<dbReference type="PDBsum" id="8E4H"/>
<dbReference type="PDBsum" id="8E5Y"/>
<dbReference type="PDBsum" id="8EBH"/>
<dbReference type="PDBsum" id="8EE9"/>
<dbReference type="PDBsum" id="8EJ6"/>
<dbReference type="PDBsum" id="8EJ8"/>
<dbReference type="PDBsum" id="8EK3"/>
<dbReference type="PDBsum" id="8EK8"/>
<dbReference type="PDBsum" id="8EKJ"/>
<dbReference type="PDBsum" id="8EKU"/>
<dbReference type="PDBsum" id="8EKV"/>
<dbReference type="PDBsum" id="8EKZ"/>
<dbReference type="PDBsum" id="8EM9"/>
<dbReference type="PDBsum" id="8EMD"/>
<dbReference type="PDBsum" id="8ENG"/>
<dbReference type="PDBsum" id="8EO1"/>
<dbReference type="PDBsum" id="8EO4"/>
<dbReference type="PDBsum" id="8EQG"/>
<dbReference type="PDBsum" id="8EQK"/>
<dbReference type="PDBsum" id="8EQL"/>
<dbReference type="PDBsum" id="8T9U"/>
<dbReference type="PDBsum" id="8UFF"/>
<dbReference type="PDBsum" id="8UFK"/>
<dbReference type="PDBsum" id="8UFZ"/>
<dbReference type="PDBsum" id="8UHK"/>
<dbReference type="PDBsum" id="8V9N"/>
<dbReference type="PDBsum" id="8VDH"/>
<dbReference type="PDBsum" id="8VDI"/>
<dbReference type="SMR" id="P17947"/>
<dbReference type="BioGRID" id="112566">
    <property type="interactions" value="49"/>
</dbReference>
<dbReference type="CORUM" id="P17947"/>
<dbReference type="DIP" id="DIP-953N"/>
<dbReference type="FunCoup" id="P17947">
    <property type="interactions" value="745"/>
</dbReference>
<dbReference type="IntAct" id="P17947">
    <property type="interactions" value="12"/>
</dbReference>
<dbReference type="MINT" id="P17947"/>
<dbReference type="STRING" id="9606.ENSP00000227163"/>
<dbReference type="iPTMnet" id="P17947"/>
<dbReference type="PhosphoSitePlus" id="P17947"/>
<dbReference type="BioMuta" id="SPI1"/>
<dbReference type="DMDM" id="60415923"/>
<dbReference type="MassIVE" id="P17947"/>
<dbReference type="PaxDb" id="9606-ENSP00000227163"/>
<dbReference type="PeptideAtlas" id="P17947"/>
<dbReference type="ProteomicsDB" id="53528">
    <molecule id="P17947-1"/>
</dbReference>
<dbReference type="ProteomicsDB" id="53529">
    <molecule id="P17947-2"/>
</dbReference>
<dbReference type="Antibodypedia" id="26734">
    <property type="antibodies" value="570 antibodies from 43 providers"/>
</dbReference>
<dbReference type="DNASU" id="6688"/>
<dbReference type="Ensembl" id="ENST00000227163.8">
    <molecule id="P17947-2"/>
    <property type="protein sequence ID" value="ENSP00000227163.4"/>
    <property type="gene ID" value="ENSG00000066336.13"/>
</dbReference>
<dbReference type="Ensembl" id="ENST00000378538.8">
    <molecule id="P17947-1"/>
    <property type="protein sequence ID" value="ENSP00000367799.4"/>
    <property type="gene ID" value="ENSG00000066336.13"/>
</dbReference>
<dbReference type="GeneID" id="6688"/>
<dbReference type="KEGG" id="hsa:6688"/>
<dbReference type="MANE-Select" id="ENST00000378538.8">
    <property type="protein sequence ID" value="ENSP00000367799.4"/>
    <property type="RefSeq nucleotide sequence ID" value="NM_003120.3"/>
    <property type="RefSeq protein sequence ID" value="NP_003111.2"/>
</dbReference>
<dbReference type="UCSC" id="uc001nfb.2">
    <molecule id="P17947-1"/>
    <property type="organism name" value="human"/>
</dbReference>
<dbReference type="AGR" id="HGNC:11241"/>
<dbReference type="CTD" id="6688"/>
<dbReference type="DisGeNET" id="6688"/>
<dbReference type="GeneCards" id="SPI1"/>
<dbReference type="HGNC" id="HGNC:11241">
    <property type="gene designation" value="SPI1"/>
</dbReference>
<dbReference type="HPA" id="ENSG00000066336">
    <property type="expression patterns" value="Group enriched (bone marrow, lung, lymphoid tissue)"/>
</dbReference>
<dbReference type="MalaCards" id="SPI1"/>
<dbReference type="MIM" id="165170">
    <property type="type" value="gene"/>
</dbReference>
<dbReference type="MIM" id="619707">
    <property type="type" value="phenotype"/>
</dbReference>
<dbReference type="neXtProt" id="NX_P17947"/>
<dbReference type="NIAGADS" id="ENSG00000066336"/>
<dbReference type="OpenTargets" id="ENSG00000066336"/>
<dbReference type="Orphanet" id="33110">
    <property type="disease" value="Autosomal non-syndromic agammaglobulinemia"/>
</dbReference>
<dbReference type="PharmGKB" id="PA36071"/>
<dbReference type="VEuPathDB" id="HostDB:ENSG00000066336"/>
<dbReference type="eggNOG" id="KOG3805">
    <property type="taxonomic scope" value="Eukaryota"/>
</dbReference>
<dbReference type="GeneTree" id="ENSGT00940000159754"/>
<dbReference type="HOGENOM" id="CLU_066451_0_0_1"/>
<dbReference type="InParanoid" id="P17947"/>
<dbReference type="OMA" id="SYLPRMY"/>
<dbReference type="OrthoDB" id="10043646at2759"/>
<dbReference type="PAN-GO" id="P17947">
    <property type="GO annotations" value="4 GO annotations based on evolutionary models"/>
</dbReference>
<dbReference type="PhylomeDB" id="P17947"/>
<dbReference type="TreeFam" id="TF352494"/>
<dbReference type="PathwayCommons" id="P17947"/>
<dbReference type="Reactome" id="R-HSA-8939236">
    <property type="pathway name" value="RUNX1 regulates transcription of genes involved in differentiation of HSCs"/>
</dbReference>
<dbReference type="Reactome" id="R-HSA-9616222">
    <property type="pathway name" value="Transcriptional regulation of granulopoiesis"/>
</dbReference>
<dbReference type="SignaLink" id="P17947"/>
<dbReference type="SIGNOR" id="P17947"/>
<dbReference type="BioGRID-ORCS" id="6688">
    <property type="hits" value="73 hits in 1195 CRISPR screens"/>
</dbReference>
<dbReference type="ChiTaRS" id="SPI1">
    <property type="organism name" value="human"/>
</dbReference>
<dbReference type="GeneWiki" id="SPI1"/>
<dbReference type="GenomeRNAi" id="6688"/>
<dbReference type="Pharos" id="P17947">
    <property type="development level" value="Tbio"/>
</dbReference>
<dbReference type="PRO" id="PR:P17947"/>
<dbReference type="Proteomes" id="UP000005640">
    <property type="component" value="Chromosome 11"/>
</dbReference>
<dbReference type="RNAct" id="P17947">
    <property type="molecule type" value="protein"/>
</dbReference>
<dbReference type="Bgee" id="ENSG00000066336">
    <property type="expression patterns" value="Expressed in granulocyte and 102 other cell types or tissues"/>
</dbReference>
<dbReference type="ExpressionAtlas" id="P17947">
    <property type="expression patterns" value="baseline and differential"/>
</dbReference>
<dbReference type="GO" id="GO:0000785">
    <property type="term" value="C:chromatin"/>
    <property type="evidence" value="ECO:0000314"/>
    <property type="project" value="BHF-UCL"/>
</dbReference>
<dbReference type="GO" id="GO:0005654">
    <property type="term" value="C:nucleoplasm"/>
    <property type="evidence" value="ECO:0000314"/>
    <property type="project" value="HPA"/>
</dbReference>
<dbReference type="GO" id="GO:0005634">
    <property type="term" value="C:nucleus"/>
    <property type="evidence" value="ECO:0000314"/>
    <property type="project" value="UniProtKB"/>
</dbReference>
<dbReference type="GO" id="GO:0005667">
    <property type="term" value="C:transcription regulator complex"/>
    <property type="evidence" value="ECO:0000314"/>
    <property type="project" value="ARUK-UCL"/>
</dbReference>
<dbReference type="GO" id="GO:0003682">
    <property type="term" value="F:chromatin binding"/>
    <property type="evidence" value="ECO:0000250"/>
    <property type="project" value="ARUK-UCL"/>
</dbReference>
<dbReference type="GO" id="GO:0000987">
    <property type="term" value="F:cis-regulatory region sequence-specific DNA binding"/>
    <property type="evidence" value="ECO:0000314"/>
    <property type="project" value="ARUK-UCL"/>
</dbReference>
<dbReference type="GO" id="GO:0001216">
    <property type="term" value="F:DNA-binding transcription activator activity"/>
    <property type="evidence" value="ECO:0000314"/>
    <property type="project" value="ARUK-UCL"/>
</dbReference>
<dbReference type="GO" id="GO:0001228">
    <property type="term" value="F:DNA-binding transcription activator activity, RNA polymerase II-specific"/>
    <property type="evidence" value="ECO:0007669"/>
    <property type="project" value="Ensembl"/>
</dbReference>
<dbReference type="GO" id="GO:0003700">
    <property type="term" value="F:DNA-binding transcription factor activity"/>
    <property type="evidence" value="ECO:0000314"/>
    <property type="project" value="BHF-UCL"/>
</dbReference>
<dbReference type="GO" id="GO:0000981">
    <property type="term" value="F:DNA-binding transcription factor activity, RNA polymerase II-specific"/>
    <property type="evidence" value="ECO:0000250"/>
    <property type="project" value="BHF-UCL"/>
</dbReference>
<dbReference type="GO" id="GO:0140297">
    <property type="term" value="F:DNA-binding transcription factor binding"/>
    <property type="evidence" value="ECO:0000353"/>
    <property type="project" value="ARUK-UCL"/>
</dbReference>
<dbReference type="GO" id="GO:0001217">
    <property type="term" value="F:DNA-binding transcription repressor activity"/>
    <property type="evidence" value="ECO:0000314"/>
    <property type="project" value="ARUK-UCL"/>
</dbReference>
<dbReference type="GO" id="GO:0001227">
    <property type="term" value="F:DNA-binding transcription repressor activity, RNA polymerase II-specific"/>
    <property type="evidence" value="ECO:0007669"/>
    <property type="project" value="Ensembl"/>
</dbReference>
<dbReference type="GO" id="GO:0042826">
    <property type="term" value="F:histone deacetylase binding"/>
    <property type="evidence" value="ECO:0000250"/>
    <property type="project" value="ARUK-UCL"/>
</dbReference>
<dbReference type="GO" id="GO:0051525">
    <property type="term" value="F:NFAT protein binding"/>
    <property type="evidence" value="ECO:0000250"/>
    <property type="project" value="BHF-UCL"/>
</dbReference>
<dbReference type="GO" id="GO:0140311">
    <property type="term" value="F:protein sequestering activity"/>
    <property type="evidence" value="ECO:0000250"/>
    <property type="project" value="ARUK-UCL"/>
</dbReference>
<dbReference type="GO" id="GO:0003723">
    <property type="term" value="F:RNA binding"/>
    <property type="evidence" value="ECO:0007669"/>
    <property type="project" value="UniProtKB-KW"/>
</dbReference>
<dbReference type="GO" id="GO:0000978">
    <property type="term" value="F:RNA polymerase II cis-regulatory region sequence-specific DNA binding"/>
    <property type="evidence" value="ECO:0000314"/>
    <property type="project" value="UniProtKB"/>
</dbReference>
<dbReference type="GO" id="GO:0061629">
    <property type="term" value="F:RNA polymerase II-specific DNA-binding transcription factor binding"/>
    <property type="evidence" value="ECO:0000353"/>
    <property type="project" value="ARUK-UCL"/>
</dbReference>
<dbReference type="GO" id="GO:0043565">
    <property type="term" value="F:sequence-specific DNA binding"/>
    <property type="evidence" value="ECO:0000314"/>
    <property type="project" value="UniProtKB"/>
</dbReference>
<dbReference type="GO" id="GO:0097677">
    <property type="term" value="F:STAT family protein binding"/>
    <property type="evidence" value="ECO:0000353"/>
    <property type="project" value="ARUK-UCL"/>
</dbReference>
<dbReference type="GO" id="GO:0000976">
    <property type="term" value="F:transcription cis-regulatory region binding"/>
    <property type="evidence" value="ECO:0000314"/>
    <property type="project" value="ARUK-UCL"/>
</dbReference>
<dbReference type="GO" id="GO:0060033">
    <property type="term" value="P:anatomical structure regression"/>
    <property type="evidence" value="ECO:0007669"/>
    <property type="project" value="Ensembl"/>
</dbReference>
<dbReference type="GO" id="GO:1902262">
    <property type="term" value="P:apoptotic process involved in blood vessel morphogenesis"/>
    <property type="evidence" value="ECO:0007669"/>
    <property type="project" value="Ensembl"/>
</dbReference>
<dbReference type="GO" id="GO:0030154">
    <property type="term" value="P:cell differentiation"/>
    <property type="evidence" value="ECO:0000318"/>
    <property type="project" value="GO_Central"/>
</dbReference>
<dbReference type="GO" id="GO:0071361">
    <property type="term" value="P:cellular response to ethanol"/>
    <property type="evidence" value="ECO:0007669"/>
    <property type="project" value="Ensembl"/>
</dbReference>
<dbReference type="GO" id="GO:0002357">
    <property type="term" value="P:defense response to tumor cell"/>
    <property type="evidence" value="ECO:0000315"/>
    <property type="project" value="ARUK-UCL"/>
</dbReference>
<dbReference type="GO" id="GO:0098508">
    <property type="term" value="P:endothelial to hematopoietic transition"/>
    <property type="evidence" value="ECO:0000250"/>
    <property type="project" value="ARUK-UCL"/>
</dbReference>
<dbReference type="GO" id="GO:0030218">
    <property type="term" value="P:erythrocyte differentiation"/>
    <property type="evidence" value="ECO:0007669"/>
    <property type="project" value="Ensembl"/>
</dbReference>
<dbReference type="GO" id="GO:0002316">
    <property type="term" value="P:follicular B cell differentiation"/>
    <property type="evidence" value="ECO:0007669"/>
    <property type="project" value="Ensembl"/>
</dbReference>
<dbReference type="GO" id="GO:0002314">
    <property type="term" value="P:germinal center B cell differentiation"/>
    <property type="evidence" value="ECO:0007669"/>
    <property type="project" value="Ensembl"/>
</dbReference>
<dbReference type="GO" id="GO:0030851">
    <property type="term" value="P:granulocyte differentiation"/>
    <property type="evidence" value="ECO:0007669"/>
    <property type="project" value="Ensembl"/>
</dbReference>
<dbReference type="GO" id="GO:0002327">
    <property type="term" value="P:immature B cell differentiation"/>
    <property type="evidence" value="ECO:0007669"/>
    <property type="project" value="Ensembl"/>
</dbReference>
<dbReference type="GO" id="GO:0070102">
    <property type="term" value="P:interleukin-6-mediated signaling pathway"/>
    <property type="evidence" value="ECO:0000314"/>
    <property type="project" value="ARUK-UCL"/>
</dbReference>
<dbReference type="GO" id="GO:0031663">
    <property type="term" value="P:lipopolysaccharide-mediated signaling pathway"/>
    <property type="evidence" value="ECO:0007669"/>
    <property type="project" value="Ensembl"/>
</dbReference>
<dbReference type="GO" id="GO:0030225">
    <property type="term" value="P:macrophage differentiation"/>
    <property type="evidence" value="ECO:0007669"/>
    <property type="project" value="Ensembl"/>
</dbReference>
<dbReference type="GO" id="GO:0043011">
    <property type="term" value="P:myeloid dendritic cell differentiation"/>
    <property type="evidence" value="ECO:0007669"/>
    <property type="project" value="Ensembl"/>
</dbReference>
<dbReference type="GO" id="GO:0002573">
    <property type="term" value="P:myeloid leukocyte differentiation"/>
    <property type="evidence" value="ECO:0000315"/>
    <property type="project" value="ARUK-UCL"/>
</dbReference>
<dbReference type="GO" id="GO:1904178">
    <property type="term" value="P:negative regulation of adipose tissue development"/>
    <property type="evidence" value="ECO:0000250"/>
    <property type="project" value="ARUK-UCL"/>
</dbReference>
<dbReference type="GO" id="GO:0043124">
    <property type="term" value="P:negative regulation of canonical NF-kappaB signal transduction"/>
    <property type="evidence" value="ECO:0000314"/>
    <property type="project" value="ARUK-UCL"/>
</dbReference>
<dbReference type="GO" id="GO:0045892">
    <property type="term" value="P:negative regulation of DNA-templated transcription"/>
    <property type="evidence" value="ECO:0000314"/>
    <property type="project" value="UniProtKB"/>
</dbReference>
<dbReference type="GO" id="GO:0010629">
    <property type="term" value="P:negative regulation of gene expression"/>
    <property type="evidence" value="ECO:0000315"/>
    <property type="project" value="ARUK-UCL"/>
</dbReference>
<dbReference type="GO" id="GO:0045347">
    <property type="term" value="P:negative regulation of MHC class II biosynthetic process"/>
    <property type="evidence" value="ECO:0007669"/>
    <property type="project" value="Ensembl"/>
</dbReference>
<dbReference type="GO" id="GO:0043314">
    <property type="term" value="P:negative regulation of neutrophil degranulation"/>
    <property type="evidence" value="ECO:0000250"/>
    <property type="project" value="ARUK-UCL"/>
</dbReference>
<dbReference type="GO" id="GO:1901223">
    <property type="term" value="P:negative regulation of non-canonical NF-kappaB signal transduction"/>
    <property type="evidence" value="ECO:0000315"/>
    <property type="project" value="ARUK-UCL"/>
</dbReference>
<dbReference type="GO" id="GO:0120186">
    <property type="term" value="P:negative regulation of protein localization to chromatin"/>
    <property type="evidence" value="ECO:0000250"/>
    <property type="project" value="ARUK-UCL"/>
</dbReference>
<dbReference type="GO" id="GO:0000122">
    <property type="term" value="P:negative regulation of transcription by RNA polymerase II"/>
    <property type="evidence" value="ECO:0000315"/>
    <property type="project" value="ARUK-UCL"/>
</dbReference>
<dbReference type="GO" id="GO:0090402">
    <property type="term" value="P:oncogene-induced cell senescence"/>
    <property type="evidence" value="ECO:0000250"/>
    <property type="project" value="ARUK-UCL"/>
</dbReference>
<dbReference type="GO" id="GO:0030316">
    <property type="term" value="P:osteoclast differentiation"/>
    <property type="evidence" value="ECO:0007669"/>
    <property type="project" value="Ensembl"/>
</dbReference>
<dbReference type="GO" id="GO:1904238">
    <property type="term" value="P:pericyte cell differentiation"/>
    <property type="evidence" value="ECO:0000250"/>
    <property type="project" value="ARUK-UCL"/>
</dbReference>
<dbReference type="GO" id="GO:1905036">
    <property type="term" value="P:positive regulation of antifungal innate immune response"/>
    <property type="evidence" value="ECO:0000250"/>
    <property type="project" value="ARUK-UCL"/>
</dbReference>
<dbReference type="GO" id="GO:0045579">
    <property type="term" value="P:positive regulation of B cell differentiation"/>
    <property type="evidence" value="ECO:0000315"/>
    <property type="project" value="UniProtKB"/>
</dbReference>
<dbReference type="GO" id="GO:1904151">
    <property type="term" value="P:positive regulation of microglial cell mediated cytotoxicity"/>
    <property type="evidence" value="ECO:0000250"/>
    <property type="project" value="ARUK-UCL"/>
</dbReference>
<dbReference type="GO" id="GO:1902895">
    <property type="term" value="P:positive regulation of miRNA transcription"/>
    <property type="evidence" value="ECO:0000314"/>
    <property type="project" value="BHF-UCL"/>
</dbReference>
<dbReference type="GO" id="GO:2000529">
    <property type="term" value="P:positive regulation of myeloid dendritic cell chemotaxis"/>
    <property type="evidence" value="ECO:0007669"/>
    <property type="project" value="Ensembl"/>
</dbReference>
<dbReference type="GO" id="GO:1900745">
    <property type="term" value="P:positive regulation of p38MAPK cascade"/>
    <property type="evidence" value="ECO:0000250"/>
    <property type="project" value="ARUK-UCL"/>
</dbReference>
<dbReference type="GO" id="GO:0045944">
    <property type="term" value="P:positive regulation of transcription by RNA polymerase II"/>
    <property type="evidence" value="ECO:0000314"/>
    <property type="project" value="ARUK-UCL"/>
</dbReference>
<dbReference type="GO" id="GO:0002572">
    <property type="term" value="P:pro-T cell differentiation"/>
    <property type="evidence" value="ECO:0000250"/>
    <property type="project" value="ARUK-UCL"/>
</dbReference>
<dbReference type="GO" id="GO:0006355">
    <property type="term" value="P:regulation of DNA-templated transcription"/>
    <property type="evidence" value="ECO:0000314"/>
    <property type="project" value="ARUK-UCL"/>
</dbReference>
<dbReference type="GO" id="GO:0045646">
    <property type="term" value="P:regulation of erythrocyte differentiation"/>
    <property type="evidence" value="ECO:0000315"/>
    <property type="project" value="BHF-UCL"/>
</dbReference>
<dbReference type="GO" id="GO:1905453">
    <property type="term" value="P:regulation of myeloid progenitor cell differentiation"/>
    <property type="evidence" value="ECO:0000250"/>
    <property type="project" value="ARUK-UCL"/>
</dbReference>
<dbReference type="GO" id="GO:0006357">
    <property type="term" value="P:regulation of transcription by RNA polymerase II"/>
    <property type="evidence" value="ECO:0000318"/>
    <property type="project" value="GO_Central"/>
</dbReference>
<dbReference type="GO" id="GO:0035019">
    <property type="term" value="P:somatic stem cell population maintenance"/>
    <property type="evidence" value="ECO:0007669"/>
    <property type="project" value="Ensembl"/>
</dbReference>
<dbReference type="GO" id="GO:0036462">
    <property type="term" value="P:TRAIL-activated apoptotic signaling pathway"/>
    <property type="evidence" value="ECO:0000315"/>
    <property type="project" value="ARUK-UCL"/>
</dbReference>
<dbReference type="GO" id="GO:0045815">
    <property type="term" value="P:transcription initiation-coupled chromatin remodeling"/>
    <property type="evidence" value="ECO:0000315"/>
    <property type="project" value="UniProtKB"/>
</dbReference>
<dbReference type="GO" id="GO:0007179">
    <property type="term" value="P:transforming growth factor beta receptor signaling pathway"/>
    <property type="evidence" value="ECO:0007669"/>
    <property type="project" value="Ensembl"/>
</dbReference>
<dbReference type="DisProt" id="DP02918"/>
<dbReference type="FunFam" id="1.10.10.10:FF:000250">
    <property type="entry name" value="transcription factor Spi-B isoform X1"/>
    <property type="match status" value="1"/>
</dbReference>
<dbReference type="Gene3D" id="1.10.10.10">
    <property type="entry name" value="Winged helix-like DNA-binding domain superfamily/Winged helix DNA-binding domain"/>
    <property type="match status" value="1"/>
</dbReference>
<dbReference type="InterPro" id="IPR000418">
    <property type="entry name" value="Ets_dom"/>
</dbReference>
<dbReference type="InterPro" id="IPR046328">
    <property type="entry name" value="ETS_fam"/>
</dbReference>
<dbReference type="InterPro" id="IPR036388">
    <property type="entry name" value="WH-like_DNA-bd_sf"/>
</dbReference>
<dbReference type="InterPro" id="IPR036390">
    <property type="entry name" value="WH_DNA-bd_sf"/>
</dbReference>
<dbReference type="PANTHER" id="PTHR11849">
    <property type="entry name" value="ETS"/>
    <property type="match status" value="1"/>
</dbReference>
<dbReference type="PANTHER" id="PTHR11849:SF16">
    <property type="entry name" value="TRANSCRIPTION FACTOR PU.1"/>
    <property type="match status" value="1"/>
</dbReference>
<dbReference type="Pfam" id="PF00178">
    <property type="entry name" value="Ets"/>
    <property type="match status" value="1"/>
</dbReference>
<dbReference type="PRINTS" id="PR00454">
    <property type="entry name" value="ETSDOMAIN"/>
</dbReference>
<dbReference type="SMART" id="SM00413">
    <property type="entry name" value="ETS"/>
    <property type="match status" value="1"/>
</dbReference>
<dbReference type="SUPFAM" id="SSF46785">
    <property type="entry name" value="Winged helix' DNA-binding domain"/>
    <property type="match status" value="1"/>
</dbReference>
<dbReference type="PROSITE" id="PS00345">
    <property type="entry name" value="ETS_DOMAIN_1"/>
    <property type="match status" value="1"/>
</dbReference>
<dbReference type="PROSITE" id="PS00346">
    <property type="entry name" value="ETS_DOMAIN_2"/>
    <property type="match status" value="1"/>
</dbReference>
<dbReference type="PROSITE" id="PS50061">
    <property type="entry name" value="ETS_DOMAIN_3"/>
    <property type="match status" value="1"/>
</dbReference>
<feature type="chain" id="PRO_0000204132" description="Transcription factor PU.1">
    <location>
        <begin position="1"/>
        <end position="270"/>
    </location>
</feature>
<feature type="DNA-binding region" description="ETS" evidence="3">
    <location>
        <begin position="170"/>
        <end position="253"/>
    </location>
</feature>
<feature type="region of interest" description="Disordered" evidence="4">
    <location>
        <begin position="123"/>
        <end position="164"/>
    </location>
</feature>
<feature type="compositionally biased region" description="Low complexity" evidence="4">
    <location>
        <begin position="153"/>
        <end position="164"/>
    </location>
</feature>
<feature type="binding site" description="forms a salt bridge with the phosphate backbone of the opposite strand downstream of the GGAA core sequence" evidence="1">
    <location>
        <position position="217"/>
    </location>
    <ligand>
        <name>DNA</name>
        <dbReference type="ChEBI" id="CHEBI:16991"/>
    </ligand>
</feature>
<feature type="binding site" description="contacts bases in the GGAA sequence in the major groove" evidence="1">
    <location>
        <position position="230"/>
    </location>
    <ligand>
        <name>DNA</name>
        <dbReference type="ChEBI" id="CHEBI:16991"/>
    </ligand>
</feature>
<feature type="binding site" description="contacts bases in the GGAA sequence in the major groove" evidence="1">
    <location>
        <position position="233"/>
    </location>
    <ligand>
        <name>DNA</name>
        <dbReference type="ChEBI" id="CHEBI:16991"/>
    </ligand>
</feature>
<feature type="binding site" description="contacts the phosphate backbone of the GGAA sequence in the minor groove upstream" evidence="1">
    <location>
        <position position="243"/>
    </location>
    <ligand>
        <name>DNA</name>
        <dbReference type="ChEBI" id="CHEBI:16991"/>
    </ligand>
</feature>
<feature type="modified residue" description="Phosphoserine" evidence="15">
    <location>
        <position position="140"/>
    </location>
</feature>
<feature type="modified residue" description="Phosphoserine" evidence="15">
    <location>
        <position position="146"/>
    </location>
</feature>
<feature type="splice variant" id="VSP_038690" description="In isoform 2." evidence="13">
    <original>P</original>
    <variation>PQ</variation>
    <location>
        <position position="15"/>
    </location>
</feature>
<feature type="sequence variant" id="VAR_086811" description="In AGM10; undetectable protein expression in peripheral blood mononuclear cells." evidence="11">
    <location>
        <begin position="110"/>
        <end position="270"/>
    </location>
</feature>
<feature type="sequence variant" id="VAR_086812" description="In AGM10; undetectable protein expression in peripheral blood mononuclear cells." evidence="11">
    <location>
        <begin position="121"/>
        <end position="270"/>
    </location>
</feature>
<feature type="sequence variant" id="VAR_086813" description="In AGM10; very low protein expression, if any, in peripheral blood mononuclear cells; when tested in transfected cells, decreased transcription activation; in vitro, fails to bind PU motif-containing DNA probes; does not affect interaction with IRF4 and IRF8, nor nuclear localization; dbSNP:rs2095906547." evidence="11">
    <original>H</original>
    <variation>P</variation>
    <location>
        <position position="211"/>
    </location>
</feature>
<feature type="sequence variant" id="VAR_086814" description="In AGM10; very low protein expression, if any, in peripheral blood mononuclear cells; when tested in transfected cells, decreased transcription activation; in vitro, fails to bind PU motif-containing DNA probes; does not affect interaction with IRF4 and IRF8, nor nuclear localization; dbSNP:rs2095906404." evidence="11">
    <original>V</original>
    <variation>G</variation>
    <location>
        <position position="241"/>
    </location>
</feature>
<feature type="helix" evidence="16">
    <location>
        <begin position="172"/>
        <end position="182"/>
    </location>
</feature>
<feature type="turn" evidence="16">
    <location>
        <begin position="183"/>
        <end position="188"/>
    </location>
</feature>
<feature type="strand" evidence="16">
    <location>
        <begin position="189"/>
        <end position="193"/>
    </location>
</feature>
<feature type="turn" evidence="16">
    <location>
        <begin position="194"/>
        <end position="197"/>
    </location>
</feature>
<feature type="strand" evidence="16">
    <location>
        <begin position="198"/>
        <end position="201"/>
    </location>
</feature>
<feature type="turn" evidence="16">
    <location>
        <begin position="203"/>
        <end position="205"/>
    </location>
</feature>
<feature type="helix" evidence="16">
    <location>
        <begin position="206"/>
        <end position="217"/>
    </location>
</feature>
<feature type="helix" evidence="16">
    <location>
        <begin position="225"/>
        <end position="233"/>
    </location>
</feature>
<feature type="helix" evidence="16">
    <location>
        <begin position="235"/>
        <end position="238"/>
    </location>
</feature>
<feature type="strand" evidence="16">
    <location>
        <begin position="239"/>
        <end position="243"/>
    </location>
</feature>
<feature type="strand" evidence="16">
    <location>
        <begin position="249"/>
        <end position="252"/>
    </location>
</feature>
<feature type="helix" evidence="16">
    <location>
        <begin position="254"/>
        <end position="258"/>
    </location>
</feature>